<proteinExistence type="inferred from homology"/>
<comment type="function">
    <text evidence="1">Catalyzes the reduction of a carbon-carbon double bond in an enoyl moiety that is covalently linked to an acyl carrier protein (ACP). Involved in the elongation cycle of fatty acid which are used in the lipid metabolism and in the biotin biosynthesis (By similarity).</text>
</comment>
<comment type="catalytic activity">
    <reaction>
        <text>a 2,3-saturated acyl-[ACP] + NAD(+) = a (2E)-enoyl-[ACP] + NADH + H(+)</text>
        <dbReference type="Rhea" id="RHEA:10240"/>
        <dbReference type="Rhea" id="RHEA-COMP:9925"/>
        <dbReference type="Rhea" id="RHEA-COMP:9926"/>
        <dbReference type="ChEBI" id="CHEBI:15378"/>
        <dbReference type="ChEBI" id="CHEBI:57540"/>
        <dbReference type="ChEBI" id="CHEBI:57945"/>
        <dbReference type="ChEBI" id="CHEBI:78784"/>
        <dbReference type="ChEBI" id="CHEBI:78785"/>
        <dbReference type="EC" id="1.3.1.9"/>
    </reaction>
</comment>
<comment type="pathway">
    <text>Lipid metabolism; fatty acid biosynthesis.</text>
</comment>
<comment type="pathway">
    <text>Cofactor biosynthesis; biotin biosynthesis.</text>
</comment>
<comment type="subunit">
    <text evidence="1">Homotetramer.</text>
</comment>
<comment type="similarity">
    <text evidence="2">Belongs to the short-chain dehydrogenases/reductases (SDR) family. FabI subfamily.</text>
</comment>
<evidence type="ECO:0000250" key="1"/>
<evidence type="ECO:0000305" key="2"/>
<protein>
    <recommendedName>
        <fullName>Enoyl-[acyl-carrier-protein] reductase [NADH] FabI</fullName>
        <shortName>ENR</shortName>
        <ecNumber>1.3.1.9</ecNumber>
    </recommendedName>
    <alternativeName>
        <fullName>NADH-dependent enoyl-ACP reductase</fullName>
    </alternativeName>
</protein>
<name>FABI_BUCAP</name>
<dbReference type="EC" id="1.3.1.9"/>
<dbReference type="EMBL" id="AE013218">
    <property type="protein sequence ID" value="AAM67813.1"/>
    <property type="molecule type" value="Genomic_DNA"/>
</dbReference>
<dbReference type="RefSeq" id="WP_011053780.1">
    <property type="nucleotide sequence ID" value="NC_004061.1"/>
</dbReference>
<dbReference type="SMR" id="Q8K9Q6"/>
<dbReference type="STRING" id="198804.BUsg_255"/>
<dbReference type="GeneID" id="93003725"/>
<dbReference type="KEGG" id="bas:BUsg_255"/>
<dbReference type="eggNOG" id="COG0623">
    <property type="taxonomic scope" value="Bacteria"/>
</dbReference>
<dbReference type="HOGENOM" id="CLU_010194_10_1_6"/>
<dbReference type="UniPathway" id="UPA00078"/>
<dbReference type="UniPathway" id="UPA00094"/>
<dbReference type="Proteomes" id="UP000000416">
    <property type="component" value="Chromosome"/>
</dbReference>
<dbReference type="GO" id="GO:0004318">
    <property type="term" value="F:enoyl-[acyl-carrier-protein] reductase (NADH) activity"/>
    <property type="evidence" value="ECO:0000250"/>
    <property type="project" value="UniProtKB"/>
</dbReference>
<dbReference type="GO" id="GO:0042802">
    <property type="term" value="F:identical protein binding"/>
    <property type="evidence" value="ECO:0000250"/>
    <property type="project" value="UniProtKB"/>
</dbReference>
<dbReference type="GO" id="GO:0009102">
    <property type="term" value="P:biotin biosynthetic process"/>
    <property type="evidence" value="ECO:0000250"/>
    <property type="project" value="UniProtKB"/>
</dbReference>
<dbReference type="GO" id="GO:0030497">
    <property type="term" value="P:fatty acid elongation"/>
    <property type="evidence" value="ECO:0000250"/>
    <property type="project" value="UniProtKB"/>
</dbReference>
<dbReference type="CDD" id="cd05372">
    <property type="entry name" value="ENR_SDR"/>
    <property type="match status" value="1"/>
</dbReference>
<dbReference type="FunFam" id="3.40.50.720:FF:000054">
    <property type="entry name" value="Enoyl-[acyl-carrier-protein] reductase [NADH]"/>
    <property type="match status" value="1"/>
</dbReference>
<dbReference type="Gene3D" id="1.10.8.400">
    <property type="entry name" value="Enoyl acyl carrier protein reductase"/>
    <property type="match status" value="1"/>
</dbReference>
<dbReference type="Gene3D" id="3.40.50.720">
    <property type="entry name" value="NAD(P)-binding Rossmann-like Domain"/>
    <property type="match status" value="1"/>
</dbReference>
<dbReference type="InterPro" id="IPR014358">
    <property type="entry name" value="Enoyl-ACP_Rdtase_NADH"/>
</dbReference>
<dbReference type="InterPro" id="IPR036291">
    <property type="entry name" value="NAD(P)-bd_dom_sf"/>
</dbReference>
<dbReference type="InterPro" id="IPR002347">
    <property type="entry name" value="SDR_fam"/>
</dbReference>
<dbReference type="PANTHER" id="PTHR43159">
    <property type="entry name" value="ENOYL-[ACYL-CARRIER-PROTEIN] REDUCTASE"/>
    <property type="match status" value="1"/>
</dbReference>
<dbReference type="PANTHER" id="PTHR43159:SF2">
    <property type="entry name" value="ENOYL-[ACYL-CARRIER-PROTEIN] REDUCTASE [NADH], CHLOROPLASTIC"/>
    <property type="match status" value="1"/>
</dbReference>
<dbReference type="Pfam" id="PF13561">
    <property type="entry name" value="adh_short_C2"/>
    <property type="match status" value="1"/>
</dbReference>
<dbReference type="PIRSF" id="PIRSF000094">
    <property type="entry name" value="Enoyl-ACP_rdct"/>
    <property type="match status" value="1"/>
</dbReference>
<dbReference type="SUPFAM" id="SSF51735">
    <property type="entry name" value="NAD(P)-binding Rossmann-fold domains"/>
    <property type="match status" value="1"/>
</dbReference>
<accession>Q8K9Q6</accession>
<gene>
    <name type="primary">fabI</name>
    <name type="ordered locus">BUsg_255</name>
</gene>
<reference key="1">
    <citation type="journal article" date="2002" name="Science">
        <title>50 million years of genomic stasis in endosymbiotic bacteria.</title>
        <authorList>
            <person name="Tamas I."/>
            <person name="Klasson L."/>
            <person name="Canbaeck B."/>
            <person name="Naeslund A.K."/>
            <person name="Eriksson A.-S."/>
            <person name="Wernegreen J.J."/>
            <person name="Sandstroem J.P."/>
            <person name="Moran N.A."/>
            <person name="Andersson S.G.E."/>
        </authorList>
    </citation>
    <scope>NUCLEOTIDE SEQUENCE [LARGE SCALE GENOMIC DNA]</scope>
    <source>
        <strain>Sg</strain>
    </source>
</reference>
<sequence>MGILKGKKILITGILNEKSIAFGIAKSMYKQEAELIFVCQNKKIINKIKYLIKSINYNTIFFCDVSHDENIKELFFNIKKVWNNFDGLVHSIAYCPKKQMHEDFVESSSRKSFNICHEISSYSFLSMARECKNMLNKFSSLVTLSYLGSQKIVSNYNMMGLAKSSLEANVRYMANSLGKNNIRVNAISSGPIKTTSSYQIKNFNKIQKIHKLFSLTKNHVSSEEIGNVAAFLCSDLSIGITGSIINVDHGFNLNGINSII</sequence>
<keyword id="KW-0093">Biotin biosynthesis</keyword>
<keyword id="KW-0275">Fatty acid biosynthesis</keyword>
<keyword id="KW-0276">Fatty acid metabolism</keyword>
<keyword id="KW-0444">Lipid biosynthesis</keyword>
<keyword id="KW-0443">Lipid metabolism</keyword>
<keyword id="KW-0520">NAD</keyword>
<keyword id="KW-0560">Oxidoreductase</keyword>
<feature type="chain" id="PRO_0000054897" description="Enoyl-[acyl-carrier-protein] reductase [NADH] FabI">
    <location>
        <begin position="1"/>
        <end position="260"/>
    </location>
</feature>
<feature type="active site" description="Proton acceptor" evidence="1">
    <location>
        <position position="146"/>
    </location>
</feature>
<feature type="active site" description="Proton acceptor" evidence="1">
    <location>
        <position position="156"/>
    </location>
</feature>
<feature type="binding site" evidence="1">
    <location>
        <position position="13"/>
    </location>
    <ligand>
        <name>NAD(+)</name>
        <dbReference type="ChEBI" id="CHEBI:57540"/>
    </ligand>
</feature>
<feature type="binding site" evidence="1">
    <location>
        <begin position="19"/>
        <end position="20"/>
    </location>
    <ligand>
        <name>NAD(+)</name>
        <dbReference type="ChEBI" id="CHEBI:57540"/>
    </ligand>
</feature>
<feature type="binding site" evidence="1">
    <location>
        <position position="40"/>
    </location>
    <ligand>
        <name>NAD(+)</name>
        <dbReference type="ChEBI" id="CHEBI:57540"/>
    </ligand>
</feature>
<feature type="binding site" evidence="1">
    <location>
        <begin position="64"/>
        <end position="65"/>
    </location>
    <ligand>
        <name>NAD(+)</name>
        <dbReference type="ChEBI" id="CHEBI:57540"/>
    </ligand>
</feature>
<feature type="binding site" evidence="1">
    <location>
        <position position="92"/>
    </location>
    <ligand>
        <name>NAD(+)</name>
        <dbReference type="ChEBI" id="CHEBI:57540"/>
    </ligand>
</feature>
<feature type="binding site" evidence="1">
    <location>
        <position position="163"/>
    </location>
    <ligand>
        <name>NAD(+)</name>
        <dbReference type="ChEBI" id="CHEBI:57540"/>
    </ligand>
</feature>
<feature type="binding site" evidence="1">
    <location>
        <begin position="192"/>
        <end position="196"/>
    </location>
    <ligand>
        <name>NAD(+)</name>
        <dbReference type="ChEBI" id="CHEBI:57540"/>
    </ligand>
</feature>
<feature type="site" description="Involved in acyl-ACP binding" evidence="1">
    <location>
        <position position="201"/>
    </location>
</feature>
<feature type="site" description="Involved in acyl-ACP binding" evidence="1">
    <location>
        <position position="204"/>
    </location>
</feature>
<feature type="site" description="Involved in acyl-ACP binding" evidence="1">
    <location>
        <position position="205"/>
    </location>
</feature>
<organism>
    <name type="scientific">Buchnera aphidicola subsp. Schizaphis graminum (strain Sg)</name>
    <dbReference type="NCBI Taxonomy" id="198804"/>
    <lineage>
        <taxon>Bacteria</taxon>
        <taxon>Pseudomonadati</taxon>
        <taxon>Pseudomonadota</taxon>
        <taxon>Gammaproteobacteria</taxon>
        <taxon>Enterobacterales</taxon>
        <taxon>Erwiniaceae</taxon>
        <taxon>Buchnera</taxon>
    </lineage>
</organism>